<name>NADD_PSEPG</name>
<sequence>MSKAQAVRRIGILGGTFDPVHIGHLRSALEVAELMGLDELRLLPNARPPHRDTPQVAAQDRLAMVREAVQGVACLSVDARELERDKPSYTIDTLESIRAELAGNDQLFLVLGWDAFCGLPAWHRWEELLQHCHILVLQRPDADVEPPDELRNLLAARSESDPTAMSGPAGNISFVWQTPLAVSATQIRQLLASGKSVRFLVPDAVLAYIEAHELYRAPN</sequence>
<accession>B0KJY4</accession>
<proteinExistence type="inferred from homology"/>
<evidence type="ECO:0000255" key="1">
    <source>
        <dbReference type="HAMAP-Rule" id="MF_00244"/>
    </source>
</evidence>
<organism>
    <name type="scientific">Pseudomonas putida (strain GB-1)</name>
    <dbReference type="NCBI Taxonomy" id="76869"/>
    <lineage>
        <taxon>Bacteria</taxon>
        <taxon>Pseudomonadati</taxon>
        <taxon>Pseudomonadota</taxon>
        <taxon>Gammaproteobacteria</taxon>
        <taxon>Pseudomonadales</taxon>
        <taxon>Pseudomonadaceae</taxon>
        <taxon>Pseudomonas</taxon>
    </lineage>
</organism>
<comment type="function">
    <text evidence="1">Catalyzes the reversible adenylation of nicotinate mononucleotide (NaMN) to nicotinic acid adenine dinucleotide (NaAD).</text>
</comment>
<comment type="catalytic activity">
    <reaction evidence="1">
        <text>nicotinate beta-D-ribonucleotide + ATP + H(+) = deamido-NAD(+) + diphosphate</text>
        <dbReference type="Rhea" id="RHEA:22860"/>
        <dbReference type="ChEBI" id="CHEBI:15378"/>
        <dbReference type="ChEBI" id="CHEBI:30616"/>
        <dbReference type="ChEBI" id="CHEBI:33019"/>
        <dbReference type="ChEBI" id="CHEBI:57502"/>
        <dbReference type="ChEBI" id="CHEBI:58437"/>
        <dbReference type="EC" id="2.7.7.18"/>
    </reaction>
</comment>
<comment type="pathway">
    <text evidence="1">Cofactor biosynthesis; NAD(+) biosynthesis; deamido-NAD(+) from nicotinate D-ribonucleotide: step 1/1.</text>
</comment>
<comment type="similarity">
    <text evidence="1">Belongs to the NadD family.</text>
</comment>
<protein>
    <recommendedName>
        <fullName evidence="1">Probable nicotinate-nucleotide adenylyltransferase</fullName>
        <ecNumber evidence="1">2.7.7.18</ecNumber>
    </recommendedName>
    <alternativeName>
        <fullName evidence="1">Deamido-NAD(+) diphosphorylase</fullName>
    </alternativeName>
    <alternativeName>
        <fullName evidence="1">Deamido-NAD(+) pyrophosphorylase</fullName>
    </alternativeName>
    <alternativeName>
        <fullName evidence="1">Nicotinate mononucleotide adenylyltransferase</fullName>
        <shortName evidence="1">NaMN adenylyltransferase</shortName>
    </alternativeName>
</protein>
<dbReference type="EC" id="2.7.7.18" evidence="1"/>
<dbReference type="EMBL" id="CP000926">
    <property type="protein sequence ID" value="ABZ00748.1"/>
    <property type="molecule type" value="Genomic_DNA"/>
</dbReference>
<dbReference type="RefSeq" id="WP_012274379.1">
    <property type="nucleotide sequence ID" value="NC_010322.1"/>
</dbReference>
<dbReference type="SMR" id="B0KJY4"/>
<dbReference type="KEGG" id="ppg:PputGB1_4863"/>
<dbReference type="eggNOG" id="COG1057">
    <property type="taxonomic scope" value="Bacteria"/>
</dbReference>
<dbReference type="HOGENOM" id="CLU_069765_0_0_6"/>
<dbReference type="UniPathway" id="UPA00253">
    <property type="reaction ID" value="UER00332"/>
</dbReference>
<dbReference type="Proteomes" id="UP000002157">
    <property type="component" value="Chromosome"/>
</dbReference>
<dbReference type="GO" id="GO:0005524">
    <property type="term" value="F:ATP binding"/>
    <property type="evidence" value="ECO:0007669"/>
    <property type="project" value="UniProtKB-KW"/>
</dbReference>
<dbReference type="GO" id="GO:0004515">
    <property type="term" value="F:nicotinate-nucleotide adenylyltransferase activity"/>
    <property type="evidence" value="ECO:0007669"/>
    <property type="project" value="UniProtKB-UniRule"/>
</dbReference>
<dbReference type="GO" id="GO:0009435">
    <property type="term" value="P:NAD biosynthetic process"/>
    <property type="evidence" value="ECO:0007669"/>
    <property type="project" value="UniProtKB-UniRule"/>
</dbReference>
<dbReference type="CDD" id="cd02165">
    <property type="entry name" value="NMNAT"/>
    <property type="match status" value="1"/>
</dbReference>
<dbReference type="Gene3D" id="3.40.50.620">
    <property type="entry name" value="HUPs"/>
    <property type="match status" value="1"/>
</dbReference>
<dbReference type="HAMAP" id="MF_00244">
    <property type="entry name" value="NaMN_adenylyltr"/>
    <property type="match status" value="1"/>
</dbReference>
<dbReference type="InterPro" id="IPR004821">
    <property type="entry name" value="Cyt_trans-like"/>
</dbReference>
<dbReference type="InterPro" id="IPR005248">
    <property type="entry name" value="NadD/NMNAT"/>
</dbReference>
<dbReference type="InterPro" id="IPR014729">
    <property type="entry name" value="Rossmann-like_a/b/a_fold"/>
</dbReference>
<dbReference type="NCBIfam" id="TIGR00125">
    <property type="entry name" value="cyt_tran_rel"/>
    <property type="match status" value="1"/>
</dbReference>
<dbReference type="NCBIfam" id="TIGR00482">
    <property type="entry name" value="nicotinate (nicotinamide) nucleotide adenylyltransferase"/>
    <property type="match status" value="1"/>
</dbReference>
<dbReference type="NCBIfam" id="NF000839">
    <property type="entry name" value="PRK00071.1-1"/>
    <property type="match status" value="1"/>
</dbReference>
<dbReference type="NCBIfam" id="NF000840">
    <property type="entry name" value="PRK00071.1-3"/>
    <property type="match status" value="1"/>
</dbReference>
<dbReference type="PANTHER" id="PTHR39321">
    <property type="entry name" value="NICOTINATE-NUCLEOTIDE ADENYLYLTRANSFERASE-RELATED"/>
    <property type="match status" value="1"/>
</dbReference>
<dbReference type="PANTHER" id="PTHR39321:SF3">
    <property type="entry name" value="PHOSPHOPANTETHEINE ADENYLYLTRANSFERASE"/>
    <property type="match status" value="1"/>
</dbReference>
<dbReference type="Pfam" id="PF01467">
    <property type="entry name" value="CTP_transf_like"/>
    <property type="match status" value="1"/>
</dbReference>
<dbReference type="SUPFAM" id="SSF52374">
    <property type="entry name" value="Nucleotidylyl transferase"/>
    <property type="match status" value="1"/>
</dbReference>
<reference key="1">
    <citation type="submission" date="2008-01" db="EMBL/GenBank/DDBJ databases">
        <title>Complete sequence of Pseudomonas putida GB-1.</title>
        <authorList>
            <consortium name="US DOE Joint Genome Institute"/>
            <person name="Copeland A."/>
            <person name="Lucas S."/>
            <person name="Lapidus A."/>
            <person name="Barry K."/>
            <person name="Glavina del Rio T."/>
            <person name="Dalin E."/>
            <person name="Tice H."/>
            <person name="Pitluck S."/>
            <person name="Bruce D."/>
            <person name="Goodwin L."/>
            <person name="Chertkov O."/>
            <person name="Brettin T."/>
            <person name="Detter J.C."/>
            <person name="Han C."/>
            <person name="Kuske C.R."/>
            <person name="Schmutz J."/>
            <person name="Larimer F."/>
            <person name="Land M."/>
            <person name="Hauser L."/>
            <person name="Kyrpides N."/>
            <person name="Kim E."/>
            <person name="McCarthy J.K."/>
            <person name="Richardson P."/>
        </authorList>
    </citation>
    <scope>NUCLEOTIDE SEQUENCE [LARGE SCALE GENOMIC DNA]</scope>
    <source>
        <strain>GB-1</strain>
    </source>
</reference>
<feature type="chain" id="PRO_0000336724" description="Probable nicotinate-nucleotide adenylyltransferase">
    <location>
        <begin position="1"/>
        <end position="219"/>
    </location>
</feature>
<keyword id="KW-0067">ATP-binding</keyword>
<keyword id="KW-0520">NAD</keyword>
<keyword id="KW-0547">Nucleotide-binding</keyword>
<keyword id="KW-0548">Nucleotidyltransferase</keyword>
<keyword id="KW-0662">Pyridine nucleotide biosynthesis</keyword>
<keyword id="KW-0808">Transferase</keyword>
<gene>
    <name evidence="1" type="primary">nadD</name>
    <name type="ordered locus">PputGB1_4863</name>
</gene>